<gene>
    <name evidence="1" type="primary">rad50</name>
    <name type="ordered locus">TK2211</name>
</gene>
<comment type="function">
    <text evidence="1">Part of the Rad50/Mre11 complex, which is involved in the early steps of DNA double-strand break (DSB) repair. The complex may facilitate opening of the processed DNA ends to aid in the recruitment of HerA and NurA. Rad50 controls the balance between DNA end bridging and DNA resection via ATP-dependent structural rearrangements of the Rad50/Mre11 complex.</text>
</comment>
<comment type="cofactor">
    <cofactor evidence="1">
        <name>Zn(2+)</name>
        <dbReference type="ChEBI" id="CHEBI:29105"/>
    </cofactor>
    <text evidence="1">Binds 1 zinc ion per homodimer.</text>
</comment>
<comment type="subunit">
    <text evidence="1">Homodimer. Forms a heterotetramer composed of two Mre11 subunits and two Rad50 subunits.</text>
</comment>
<comment type="domain">
    <text evidence="1">The two conserved Cys that bind zinc constitute the zinc-hook, which separates the large intramolecular coiled coil regions. The 2 Cys residues coordinate one molecule of zinc with the help of the 2 Cys residues of the zinc-hook of another Rad50 molecule, thereby forming a V-shaped homodimer.</text>
</comment>
<comment type="similarity">
    <text evidence="1">Belongs to the SMC family. RAD50 subfamily.</text>
</comment>
<feature type="chain" id="PRO_0000138663" description="DNA double-strand break repair Rad50 ATPase">
    <location>
        <begin position="1"/>
        <end position="883"/>
    </location>
</feature>
<feature type="domain" description="Zinc-hook" evidence="1">
    <location>
        <begin position="395"/>
        <end position="492"/>
    </location>
</feature>
<feature type="coiled-coil region" evidence="1">
    <location>
        <begin position="218"/>
        <end position="420"/>
    </location>
</feature>
<feature type="coiled-coil region" evidence="1">
    <location>
        <begin position="452"/>
        <end position="585"/>
    </location>
</feature>
<feature type="coiled-coil region" evidence="1">
    <location>
        <begin position="620"/>
        <end position="741"/>
    </location>
</feature>
<feature type="binding site" evidence="1">
    <location>
        <position position="12"/>
    </location>
    <ligand>
        <name>ATP</name>
        <dbReference type="ChEBI" id="CHEBI:30616"/>
    </ligand>
</feature>
<feature type="binding site" evidence="1">
    <location>
        <begin position="32"/>
        <end position="38"/>
    </location>
    <ligand>
        <name>ATP</name>
        <dbReference type="ChEBI" id="CHEBI:30616"/>
    </ligand>
</feature>
<feature type="binding site" evidence="1">
    <location>
        <position position="134"/>
    </location>
    <ligand>
        <name>ATP</name>
        <dbReference type="ChEBI" id="CHEBI:30616"/>
    </ligand>
</feature>
<feature type="binding site" evidence="1">
    <location>
        <position position="440"/>
    </location>
    <ligand>
        <name>Zn(2+)</name>
        <dbReference type="ChEBI" id="CHEBI:29105"/>
    </ligand>
</feature>
<feature type="binding site" evidence="1">
    <location>
        <position position="443"/>
    </location>
    <ligand>
        <name>Zn(2+)</name>
        <dbReference type="ChEBI" id="CHEBI:29105"/>
    </ligand>
</feature>
<feature type="binding site" evidence="1">
    <location>
        <begin position="790"/>
        <end position="795"/>
    </location>
    <ligand>
        <name>ATP</name>
        <dbReference type="ChEBI" id="CHEBI:30616"/>
    </ligand>
</feature>
<proteinExistence type="inferred from homology"/>
<name>RAD50_THEKO</name>
<reference key="1">
    <citation type="journal article" date="2005" name="Genome Res.">
        <title>Complete genome sequence of the hyperthermophilic archaeon Thermococcus kodakaraensis KOD1 and comparison with Pyrococcus genomes.</title>
        <authorList>
            <person name="Fukui T."/>
            <person name="Atomi H."/>
            <person name="Kanai T."/>
            <person name="Matsumi R."/>
            <person name="Fujiwara S."/>
            <person name="Imanaka T."/>
        </authorList>
    </citation>
    <scope>NUCLEOTIDE SEQUENCE [LARGE SCALE GENOMIC DNA]</scope>
    <source>
        <strain>ATCC BAA-918 / JCM 12380 / KOD1</strain>
    </source>
</reference>
<evidence type="ECO:0000255" key="1">
    <source>
        <dbReference type="HAMAP-Rule" id="MF_00449"/>
    </source>
</evidence>
<dbReference type="EMBL" id="AP006878">
    <property type="protein sequence ID" value="BAD86400.1"/>
    <property type="molecule type" value="Genomic_DNA"/>
</dbReference>
<dbReference type="RefSeq" id="WP_011251161.1">
    <property type="nucleotide sequence ID" value="NC_006624.1"/>
</dbReference>
<dbReference type="SMR" id="Q5JHN1"/>
<dbReference type="STRING" id="69014.TK2211"/>
<dbReference type="EnsemblBacteria" id="BAD86400">
    <property type="protein sequence ID" value="BAD86400"/>
    <property type="gene ID" value="TK2211"/>
</dbReference>
<dbReference type="GeneID" id="78448751"/>
<dbReference type="KEGG" id="tko:TK2211"/>
<dbReference type="PATRIC" id="fig|69014.16.peg.2166"/>
<dbReference type="eggNOG" id="arCOG00368">
    <property type="taxonomic scope" value="Archaea"/>
</dbReference>
<dbReference type="HOGENOM" id="CLU_004785_0_2_2"/>
<dbReference type="InParanoid" id="Q5JHN1"/>
<dbReference type="OrthoDB" id="25344at2157"/>
<dbReference type="PhylomeDB" id="Q5JHN1"/>
<dbReference type="Proteomes" id="UP000000536">
    <property type="component" value="Chromosome"/>
</dbReference>
<dbReference type="GO" id="GO:1990391">
    <property type="term" value="C:DNA repair complex"/>
    <property type="evidence" value="ECO:0000318"/>
    <property type="project" value="GO_Central"/>
</dbReference>
<dbReference type="GO" id="GO:0005524">
    <property type="term" value="F:ATP binding"/>
    <property type="evidence" value="ECO:0007669"/>
    <property type="project" value="UniProtKB-UniRule"/>
</dbReference>
<dbReference type="GO" id="GO:0016887">
    <property type="term" value="F:ATP hydrolysis activity"/>
    <property type="evidence" value="ECO:0007669"/>
    <property type="project" value="UniProtKB-UniRule"/>
</dbReference>
<dbReference type="GO" id="GO:0004529">
    <property type="term" value="F:DNA exonuclease activity"/>
    <property type="evidence" value="ECO:0000318"/>
    <property type="project" value="GO_Central"/>
</dbReference>
<dbReference type="GO" id="GO:0008270">
    <property type="term" value="F:zinc ion binding"/>
    <property type="evidence" value="ECO:0007669"/>
    <property type="project" value="UniProtKB-UniRule"/>
</dbReference>
<dbReference type="GO" id="GO:0006281">
    <property type="term" value="P:DNA repair"/>
    <property type="evidence" value="ECO:0000318"/>
    <property type="project" value="GO_Central"/>
</dbReference>
<dbReference type="GO" id="GO:0006302">
    <property type="term" value="P:double-strand break repair"/>
    <property type="evidence" value="ECO:0007669"/>
    <property type="project" value="UniProtKB-UniRule"/>
</dbReference>
<dbReference type="Gene3D" id="6.10.250.70">
    <property type="match status" value="1"/>
</dbReference>
<dbReference type="Gene3D" id="1.10.287.510">
    <property type="entry name" value="Helix hairpin bin"/>
    <property type="match status" value="1"/>
</dbReference>
<dbReference type="Gene3D" id="3.40.50.300">
    <property type="entry name" value="P-loop containing nucleotide triphosphate hydrolases"/>
    <property type="match status" value="2"/>
</dbReference>
<dbReference type="HAMAP" id="MF_00449">
    <property type="entry name" value="RAD50"/>
    <property type="match status" value="1"/>
</dbReference>
<dbReference type="InterPro" id="IPR003593">
    <property type="entry name" value="AAA+_ATPase"/>
</dbReference>
<dbReference type="InterPro" id="IPR003959">
    <property type="entry name" value="ATPase_AAA_core"/>
</dbReference>
<dbReference type="InterPro" id="IPR027417">
    <property type="entry name" value="P-loop_NTPase"/>
</dbReference>
<dbReference type="InterPro" id="IPR038729">
    <property type="entry name" value="Rad50/SbcC_AAA"/>
</dbReference>
<dbReference type="InterPro" id="IPR022982">
    <property type="entry name" value="Rad50_ATPase_archaeal"/>
</dbReference>
<dbReference type="InterPro" id="IPR013134">
    <property type="entry name" value="Zn_hook_RAD50"/>
</dbReference>
<dbReference type="NCBIfam" id="NF003034">
    <property type="entry name" value="PRK03918.1"/>
    <property type="match status" value="1"/>
</dbReference>
<dbReference type="PANTHER" id="PTHR32114">
    <property type="entry name" value="ABC TRANSPORTER ABCH.3"/>
    <property type="match status" value="1"/>
</dbReference>
<dbReference type="PANTHER" id="PTHR32114:SF2">
    <property type="entry name" value="ABC TRANSPORTER ABCH.3"/>
    <property type="match status" value="1"/>
</dbReference>
<dbReference type="Pfam" id="PF13304">
    <property type="entry name" value="AAA_21"/>
    <property type="match status" value="1"/>
</dbReference>
<dbReference type="Pfam" id="PF13476">
    <property type="entry name" value="AAA_23"/>
    <property type="match status" value="1"/>
</dbReference>
<dbReference type="Pfam" id="PF04423">
    <property type="entry name" value="Rad50_zn_hook"/>
    <property type="match status" value="1"/>
</dbReference>
<dbReference type="SMART" id="SM00382">
    <property type="entry name" value="AAA"/>
    <property type="match status" value="1"/>
</dbReference>
<dbReference type="SUPFAM" id="SSF52540">
    <property type="entry name" value="P-loop containing nucleoside triphosphate hydrolases"/>
    <property type="match status" value="2"/>
</dbReference>
<dbReference type="SUPFAM" id="SSF75712">
    <property type="entry name" value="Rad50 coiled-coil Zn hook"/>
    <property type="match status" value="1"/>
</dbReference>
<dbReference type="PROSITE" id="PS51131">
    <property type="entry name" value="ZN_HOOK"/>
    <property type="match status" value="1"/>
</dbReference>
<keyword id="KW-0067">ATP-binding</keyword>
<keyword id="KW-0175">Coiled coil</keyword>
<keyword id="KW-0227">DNA damage</keyword>
<keyword id="KW-0234">DNA repair</keyword>
<keyword id="KW-0378">Hydrolase</keyword>
<keyword id="KW-0479">Metal-binding</keyword>
<keyword id="KW-0547">Nucleotide-binding</keyword>
<keyword id="KW-1185">Reference proteome</keyword>
<keyword id="KW-0862">Zinc</keyword>
<protein>
    <recommendedName>
        <fullName evidence="1">DNA double-strand break repair Rad50 ATPase</fullName>
    </recommendedName>
</protein>
<accession>Q5JHN1</accession>
<organism>
    <name type="scientific">Thermococcus kodakarensis (strain ATCC BAA-918 / JCM 12380 / KOD1)</name>
    <name type="common">Pyrococcus kodakaraensis (strain KOD1)</name>
    <dbReference type="NCBI Taxonomy" id="69014"/>
    <lineage>
        <taxon>Archaea</taxon>
        <taxon>Methanobacteriati</taxon>
        <taxon>Methanobacteriota</taxon>
        <taxon>Thermococci</taxon>
        <taxon>Thermococcales</taxon>
        <taxon>Thermococcaceae</taxon>
        <taxon>Thermococcus</taxon>
    </lineage>
</organism>
<sequence>MKIEKLIIKDFRSHALTKVNFSSGINLIIGQNGSGKSSILDALLVGLYWPSKPKDLKKDDFERINGSGTEITVFFEKGNVKYQIHRNIGRGLAFVKYHDGSSWKTLETGQKPVRDWMEKLVPYDVFLNAIYIRQGEIDAILESDESREKVVRQVLGLDRYENSYKNLLDVRKEIDARIKAIEDYLKSTENIDELIGNLEKELTSVLREINEISPKLPELRGELGGLEKELKELEKTAEELAKARVELKSEEGNLRELEAKKSGIQSMIRETEKRVEELKEKVKELESLEEKAKEYERLSRFYRNFTEGINRIEKLLATYSQQAENLRERIDELSKKEARVKELLKEKEGLQKELGALEEDLKAYQRAKELMANLERLKKRLTLSEEEIEKLEAEIQKARERKEEIMKELEEIGSRRGELKSIAGERNKALMELKKAKGRCPVCGRELTEEHRKELLEKYTAELKEISAEMKELEKREKKLRAELVEVEKTLKKERELFALKEVLEQIRETEEKLKEYDLEKLEEANEKAEELKKKLAGLEGEIKSLEDEIKKGELLKKKLALVEKKLRELEEERASLLGELKKLGFGDVKELEERLKELEPAYKRYIELRPARDELKREEDLLKSLKLDLTAILKEIEKTSKRVEELRKRVEELEKSYDKDRHEELKGKTRELSNELAGLEARLKSLEERRDEVKASLEKLREEKETRKEKAKELEKLKKARERVQRLREKVKAYKNLLKEGALAKVGEMASEIFEELTEEKYSGVTVKAEENKVRLGVVYNGKEYGLGFLSGGERIALGLAFRLALSLYLAGEISLLILDEPTPYLDEERRRRLVDIMQRYLRKIPQVIVVSHDEELKDAADRVIRVSLENGVSVVREAEVG</sequence>